<gene>
    <name evidence="1" type="primary">grpE</name>
    <name type="ordered locus">CTL0651</name>
</gene>
<proteinExistence type="inferred from homology"/>
<evidence type="ECO:0000255" key="1">
    <source>
        <dbReference type="HAMAP-Rule" id="MF_01151"/>
    </source>
</evidence>
<evidence type="ECO:0000256" key="2">
    <source>
        <dbReference type="SAM" id="MobiDB-lite"/>
    </source>
</evidence>
<dbReference type="EMBL" id="AM884176">
    <property type="protein sequence ID" value="CAP04091.1"/>
    <property type="molecule type" value="Genomic_DNA"/>
</dbReference>
<dbReference type="RefSeq" id="WP_009872625.1">
    <property type="nucleotide sequence ID" value="NC_010287.1"/>
</dbReference>
<dbReference type="RefSeq" id="YP_001654724.1">
    <property type="nucleotide sequence ID" value="NC_010287.1"/>
</dbReference>
<dbReference type="SMR" id="B0B7W5"/>
<dbReference type="KEGG" id="ctb:CTL0651"/>
<dbReference type="PATRIC" id="fig|471472.4.peg.701"/>
<dbReference type="HOGENOM" id="CLU_057217_5_2_0"/>
<dbReference type="Proteomes" id="UP001154402">
    <property type="component" value="Chromosome"/>
</dbReference>
<dbReference type="GO" id="GO:0005737">
    <property type="term" value="C:cytoplasm"/>
    <property type="evidence" value="ECO:0007669"/>
    <property type="project" value="UniProtKB-SubCell"/>
</dbReference>
<dbReference type="GO" id="GO:0000774">
    <property type="term" value="F:adenyl-nucleotide exchange factor activity"/>
    <property type="evidence" value="ECO:0007669"/>
    <property type="project" value="InterPro"/>
</dbReference>
<dbReference type="GO" id="GO:0042803">
    <property type="term" value="F:protein homodimerization activity"/>
    <property type="evidence" value="ECO:0007669"/>
    <property type="project" value="InterPro"/>
</dbReference>
<dbReference type="GO" id="GO:0051087">
    <property type="term" value="F:protein-folding chaperone binding"/>
    <property type="evidence" value="ECO:0007669"/>
    <property type="project" value="InterPro"/>
</dbReference>
<dbReference type="GO" id="GO:0051082">
    <property type="term" value="F:unfolded protein binding"/>
    <property type="evidence" value="ECO:0007669"/>
    <property type="project" value="TreeGrafter"/>
</dbReference>
<dbReference type="GO" id="GO:0006457">
    <property type="term" value="P:protein folding"/>
    <property type="evidence" value="ECO:0007669"/>
    <property type="project" value="InterPro"/>
</dbReference>
<dbReference type="CDD" id="cd00446">
    <property type="entry name" value="GrpE"/>
    <property type="match status" value="1"/>
</dbReference>
<dbReference type="FunFam" id="2.30.22.10:FF:000001">
    <property type="entry name" value="Protein GrpE"/>
    <property type="match status" value="1"/>
</dbReference>
<dbReference type="FunFam" id="3.90.20.20:FF:000020">
    <property type="entry name" value="Protein GrpE"/>
    <property type="match status" value="1"/>
</dbReference>
<dbReference type="Gene3D" id="3.90.20.20">
    <property type="match status" value="1"/>
</dbReference>
<dbReference type="Gene3D" id="2.30.22.10">
    <property type="entry name" value="Head domain of nucleotide exchange factor GrpE"/>
    <property type="match status" value="1"/>
</dbReference>
<dbReference type="HAMAP" id="MF_01151">
    <property type="entry name" value="GrpE"/>
    <property type="match status" value="1"/>
</dbReference>
<dbReference type="InterPro" id="IPR000740">
    <property type="entry name" value="GrpE"/>
</dbReference>
<dbReference type="InterPro" id="IPR013805">
    <property type="entry name" value="GrpE_coiled_coil"/>
</dbReference>
<dbReference type="InterPro" id="IPR009012">
    <property type="entry name" value="GrpE_head"/>
</dbReference>
<dbReference type="PANTHER" id="PTHR21237">
    <property type="entry name" value="GRPE PROTEIN"/>
    <property type="match status" value="1"/>
</dbReference>
<dbReference type="PANTHER" id="PTHR21237:SF23">
    <property type="entry name" value="GRPE PROTEIN HOMOLOG, MITOCHONDRIAL"/>
    <property type="match status" value="1"/>
</dbReference>
<dbReference type="Pfam" id="PF01025">
    <property type="entry name" value="GrpE"/>
    <property type="match status" value="1"/>
</dbReference>
<dbReference type="PRINTS" id="PR00773">
    <property type="entry name" value="GRPEPROTEIN"/>
</dbReference>
<dbReference type="SUPFAM" id="SSF58014">
    <property type="entry name" value="Coiled-coil domain of nucleotide exchange factor GrpE"/>
    <property type="match status" value="1"/>
</dbReference>
<dbReference type="SUPFAM" id="SSF51064">
    <property type="entry name" value="Head domain of nucleotide exchange factor GrpE"/>
    <property type="match status" value="1"/>
</dbReference>
<dbReference type="PROSITE" id="PS01071">
    <property type="entry name" value="GRPE"/>
    <property type="match status" value="1"/>
</dbReference>
<organism>
    <name type="scientific">Chlamydia trachomatis serovar L2 (strain ATCC VR-902B / DSM 19102 / 434/Bu)</name>
    <dbReference type="NCBI Taxonomy" id="471472"/>
    <lineage>
        <taxon>Bacteria</taxon>
        <taxon>Pseudomonadati</taxon>
        <taxon>Chlamydiota</taxon>
        <taxon>Chlamydiia</taxon>
        <taxon>Chlamydiales</taxon>
        <taxon>Chlamydiaceae</taxon>
        <taxon>Chlamydia/Chlamydophila group</taxon>
        <taxon>Chlamydia</taxon>
    </lineage>
</organism>
<sequence>MTETPNTSSEEIQTSEPSPDNELQVLQQENANLKAELQEQNDRYLMALAEAENSRKRLQKERTEMMQYAVENALMDFLPPIESMEKALGFASQTSEEVKNWAIGFQMILQQFKQIFEEKGVVEYSSKGELFNPYLHEAVEIEETTTIPEGTILEEFTKGYKIGDRPIRVAKVKVAKLPAKGNSDSNEEKE</sequence>
<name>GRPE_CHLT2</name>
<reference key="1">
    <citation type="journal article" date="2008" name="Genome Res.">
        <title>Chlamydia trachomatis: genome sequence analysis of lymphogranuloma venereum isolates.</title>
        <authorList>
            <person name="Thomson N.R."/>
            <person name="Holden M.T.G."/>
            <person name="Carder C."/>
            <person name="Lennard N."/>
            <person name="Lockey S.J."/>
            <person name="Marsh P."/>
            <person name="Skipp P."/>
            <person name="O'Connor C.D."/>
            <person name="Goodhead I."/>
            <person name="Norbertzcak H."/>
            <person name="Harris B."/>
            <person name="Ormond D."/>
            <person name="Rance R."/>
            <person name="Quail M.A."/>
            <person name="Parkhill J."/>
            <person name="Stephens R.S."/>
            <person name="Clarke I.N."/>
        </authorList>
    </citation>
    <scope>NUCLEOTIDE SEQUENCE [LARGE SCALE GENOMIC DNA]</scope>
    <source>
        <strain>ATCC VR-902B / DSM 19102 / 434/Bu</strain>
    </source>
</reference>
<comment type="function">
    <text evidence="1">Participates actively in the response to hyperosmotic and heat shock by preventing the aggregation of stress-denatured proteins, in association with DnaK and GrpE. It is the nucleotide exchange factor for DnaK and may function as a thermosensor. Unfolded proteins bind initially to DnaJ; upon interaction with the DnaJ-bound protein, DnaK hydrolyzes its bound ATP, resulting in the formation of a stable complex. GrpE releases ADP from DnaK; ATP binding to DnaK triggers the release of the substrate protein, thus completing the reaction cycle. Several rounds of ATP-dependent interactions between DnaJ, DnaK and GrpE are required for fully efficient folding.</text>
</comment>
<comment type="subunit">
    <text evidence="1">Homodimer.</text>
</comment>
<comment type="subcellular location">
    <subcellularLocation>
        <location evidence="1">Cytoplasm</location>
    </subcellularLocation>
</comment>
<comment type="similarity">
    <text evidence="1">Belongs to the GrpE family.</text>
</comment>
<keyword id="KW-0143">Chaperone</keyword>
<keyword id="KW-0963">Cytoplasm</keyword>
<keyword id="KW-0346">Stress response</keyword>
<protein>
    <recommendedName>
        <fullName evidence="1">Protein GrpE</fullName>
    </recommendedName>
    <alternativeName>
        <fullName evidence="1">HSP-70 cofactor</fullName>
    </alternativeName>
</protein>
<accession>B0B7W5</accession>
<feature type="chain" id="PRO_1000137555" description="Protein GrpE">
    <location>
        <begin position="1"/>
        <end position="190"/>
    </location>
</feature>
<feature type="region of interest" description="Disordered" evidence="2">
    <location>
        <begin position="1"/>
        <end position="21"/>
    </location>
</feature>
<feature type="compositionally biased region" description="Polar residues" evidence="2">
    <location>
        <begin position="1"/>
        <end position="18"/>
    </location>
</feature>